<gene>
    <name evidence="8" type="primary">ATM1</name>
    <name type="ordered locus">YALI0E08030g</name>
</gene>
<evidence type="ECO:0000250" key="1">
    <source>
        <dbReference type="UniProtKB" id="P40416"/>
    </source>
</evidence>
<evidence type="ECO:0000250" key="2">
    <source>
        <dbReference type="UniProtKB" id="Q2G506"/>
    </source>
</evidence>
<evidence type="ECO:0000250" key="3">
    <source>
        <dbReference type="UniProtKB" id="Q9NP58"/>
    </source>
</evidence>
<evidence type="ECO:0000255" key="4"/>
<evidence type="ECO:0000255" key="5">
    <source>
        <dbReference type="PROSITE-ProRule" id="PRU00434"/>
    </source>
</evidence>
<evidence type="ECO:0000255" key="6">
    <source>
        <dbReference type="PROSITE-ProRule" id="PRU00441"/>
    </source>
</evidence>
<evidence type="ECO:0000256" key="7">
    <source>
        <dbReference type="SAM" id="MobiDB-lite"/>
    </source>
</evidence>
<evidence type="ECO:0000305" key="8"/>
<name>ATM1_YARLI</name>
<reference key="1">
    <citation type="journal article" date="2004" name="Nature">
        <title>Genome evolution in yeasts.</title>
        <authorList>
            <person name="Dujon B."/>
            <person name="Sherman D."/>
            <person name="Fischer G."/>
            <person name="Durrens P."/>
            <person name="Casaregola S."/>
            <person name="Lafontaine I."/>
            <person name="de Montigny J."/>
            <person name="Marck C."/>
            <person name="Neuveglise C."/>
            <person name="Talla E."/>
            <person name="Goffard N."/>
            <person name="Frangeul L."/>
            <person name="Aigle M."/>
            <person name="Anthouard V."/>
            <person name="Babour A."/>
            <person name="Barbe V."/>
            <person name="Barnay S."/>
            <person name="Blanchin S."/>
            <person name="Beckerich J.-M."/>
            <person name="Beyne E."/>
            <person name="Bleykasten C."/>
            <person name="Boisrame A."/>
            <person name="Boyer J."/>
            <person name="Cattolico L."/>
            <person name="Confanioleri F."/>
            <person name="de Daruvar A."/>
            <person name="Despons L."/>
            <person name="Fabre E."/>
            <person name="Fairhead C."/>
            <person name="Ferry-Dumazet H."/>
            <person name="Groppi A."/>
            <person name="Hantraye F."/>
            <person name="Hennequin C."/>
            <person name="Jauniaux N."/>
            <person name="Joyet P."/>
            <person name="Kachouri R."/>
            <person name="Kerrest A."/>
            <person name="Koszul R."/>
            <person name="Lemaire M."/>
            <person name="Lesur I."/>
            <person name="Ma L."/>
            <person name="Muller H."/>
            <person name="Nicaud J.-M."/>
            <person name="Nikolski M."/>
            <person name="Oztas S."/>
            <person name="Ozier-Kalogeropoulos O."/>
            <person name="Pellenz S."/>
            <person name="Potier S."/>
            <person name="Richard G.-F."/>
            <person name="Straub M.-L."/>
            <person name="Suleau A."/>
            <person name="Swennen D."/>
            <person name="Tekaia F."/>
            <person name="Wesolowski-Louvel M."/>
            <person name="Westhof E."/>
            <person name="Wirth B."/>
            <person name="Zeniou-Meyer M."/>
            <person name="Zivanovic Y."/>
            <person name="Bolotin-Fukuhara M."/>
            <person name="Thierry A."/>
            <person name="Bouchier C."/>
            <person name="Caudron B."/>
            <person name="Scarpelli C."/>
            <person name="Gaillardin C."/>
            <person name="Weissenbach J."/>
            <person name="Wincker P."/>
            <person name="Souciet J.-L."/>
        </authorList>
    </citation>
    <scope>NUCLEOTIDE SEQUENCE [LARGE SCALE GENOMIC DNA]</scope>
    <source>
        <strain>CLIB 122 / E 150</strain>
    </source>
</reference>
<organism>
    <name type="scientific">Yarrowia lipolytica (strain CLIB 122 / E 150)</name>
    <name type="common">Yeast</name>
    <name type="synonym">Candida lipolytica</name>
    <dbReference type="NCBI Taxonomy" id="284591"/>
    <lineage>
        <taxon>Eukaryota</taxon>
        <taxon>Fungi</taxon>
        <taxon>Dikarya</taxon>
        <taxon>Ascomycota</taxon>
        <taxon>Saccharomycotina</taxon>
        <taxon>Dipodascomycetes</taxon>
        <taxon>Dipodascales</taxon>
        <taxon>Dipodascales incertae sedis</taxon>
        <taxon>Yarrowia</taxon>
    </lineage>
</organism>
<comment type="function">
    <text evidence="1">Performs an essential function in the generation of cytoplasmic iron-sulfur proteins by mediating the ATP-dependent export of Fe/S cluster precursors synthesized by NFS1 and other mitochondrial proteins (By similarity). Hydrolyzes ATP (By similarity). Binds glutathione and may function by transporting a glutathione-conjugated iron-sulfur compound (By similarity).</text>
</comment>
<comment type="subunit">
    <text evidence="1">Homodimer.</text>
</comment>
<comment type="subcellular location">
    <subcellularLocation>
        <location evidence="1">Mitochondrion inner membrane</location>
        <topology evidence="6">Multi-pass membrane protein</topology>
    </subcellularLocation>
</comment>
<comment type="similarity">
    <text evidence="8">Belongs to the ABC transporter superfamily. ABCB family. Heavy Metal importer (TC 3.A.1.210) subfamily.</text>
</comment>
<keyword id="KW-0067">ATP-binding</keyword>
<keyword id="KW-0472">Membrane</keyword>
<keyword id="KW-0496">Mitochondrion</keyword>
<keyword id="KW-0999">Mitochondrion inner membrane</keyword>
<keyword id="KW-0547">Nucleotide-binding</keyword>
<keyword id="KW-1185">Reference proteome</keyword>
<keyword id="KW-0809">Transit peptide</keyword>
<keyword id="KW-1278">Translocase</keyword>
<keyword id="KW-0812">Transmembrane</keyword>
<keyword id="KW-1133">Transmembrane helix</keyword>
<keyword id="KW-0813">Transport</keyword>
<protein>
    <recommendedName>
        <fullName evidence="8">Iron-sulfur clusters transporter ATM1, mitochondrial</fullName>
        <ecNumber evidence="2">7.-.-.-</ecNumber>
    </recommendedName>
</protein>
<feature type="transit peptide" description="Mitochondrion" evidence="4">
    <location>
        <begin position="1"/>
        <end position="38"/>
    </location>
</feature>
<feature type="chain" id="PRO_0000255450" description="Iron-sulfur clusters transporter ATM1, mitochondrial">
    <location>
        <begin position="39"/>
        <end position="710"/>
    </location>
</feature>
<feature type="topological domain" description="Mitochondrial matrix" evidence="1">
    <location>
        <begin position="39"/>
        <end position="129"/>
    </location>
</feature>
<feature type="transmembrane region" description="Helical" evidence="6">
    <location>
        <begin position="130"/>
        <end position="151"/>
    </location>
</feature>
<feature type="topological domain" description="Mitochondrial intermembrane" evidence="1">
    <location>
        <begin position="152"/>
        <end position="173"/>
    </location>
</feature>
<feature type="transmembrane region" description="Helical" evidence="6">
    <location>
        <begin position="174"/>
        <end position="197"/>
    </location>
</feature>
<feature type="topological domain" description="Mitochondrial matrix" evidence="1">
    <location>
        <begin position="198"/>
        <end position="246"/>
    </location>
</feature>
<feature type="transmembrane region" description="Helical" evidence="6">
    <location>
        <begin position="247"/>
        <end position="270"/>
    </location>
</feature>
<feature type="topological domain" description="Mitochondrial intermembrane" evidence="1">
    <location>
        <position position="271"/>
    </location>
</feature>
<feature type="transmembrane region" description="Helical" evidence="6">
    <location>
        <begin position="272"/>
        <end position="292"/>
    </location>
</feature>
<feature type="topological domain" description="Mitochondrial matrix" evidence="1">
    <location>
        <begin position="293"/>
        <end position="358"/>
    </location>
</feature>
<feature type="transmembrane region" description="Helical" evidence="6">
    <location>
        <begin position="359"/>
        <end position="377"/>
    </location>
</feature>
<feature type="topological domain" description="Mitochondrial intermembrane" evidence="1">
    <location>
        <begin position="378"/>
        <end position="392"/>
    </location>
</feature>
<feature type="transmembrane region" description="Helical" evidence="6">
    <location>
        <begin position="393"/>
        <end position="414"/>
    </location>
</feature>
<feature type="topological domain" description="Mitochondrial matrix" evidence="1">
    <location>
        <begin position="415"/>
        <end position="710"/>
    </location>
</feature>
<feature type="domain" description="ABC transmembrane type-1" evidence="6">
    <location>
        <begin position="130"/>
        <end position="419"/>
    </location>
</feature>
<feature type="domain" description="ABC transporter" evidence="5">
    <location>
        <begin position="453"/>
        <end position="687"/>
    </location>
</feature>
<feature type="region of interest" description="Disordered" evidence="7">
    <location>
        <begin position="35"/>
        <end position="83"/>
    </location>
</feature>
<feature type="compositionally biased region" description="Polar residues" evidence="7">
    <location>
        <begin position="35"/>
        <end position="52"/>
    </location>
</feature>
<feature type="binding site" evidence="1">
    <location>
        <begin position="298"/>
        <end position="302"/>
    </location>
    <ligand>
        <name>glutathione</name>
        <dbReference type="ChEBI" id="CHEBI:57925"/>
    </ligand>
</feature>
<feature type="binding site" evidence="1">
    <location>
        <begin position="361"/>
        <end position="364"/>
    </location>
    <ligand>
        <name>glutathione</name>
        <dbReference type="ChEBI" id="CHEBI:57925"/>
    </ligand>
</feature>
<feature type="binding site" evidence="2">
    <location>
        <position position="411"/>
    </location>
    <ligand>
        <name>glutathione</name>
        <dbReference type="ChEBI" id="CHEBI:57925"/>
    </ligand>
</feature>
<feature type="binding site" evidence="3">
    <location>
        <position position="462"/>
    </location>
    <ligand>
        <name>ATP</name>
        <dbReference type="ChEBI" id="CHEBI:30616"/>
    </ligand>
</feature>
<feature type="binding site" evidence="5">
    <location>
        <begin position="486"/>
        <end position="497"/>
    </location>
    <ligand>
        <name>ATP</name>
        <dbReference type="ChEBI" id="CHEBI:30616"/>
    </ligand>
</feature>
<proteinExistence type="inferred from homology"/>
<dbReference type="EC" id="7.-.-.-" evidence="2"/>
<dbReference type="EMBL" id="CR382131">
    <property type="protein sequence ID" value="CAG79271.1"/>
    <property type="molecule type" value="Genomic_DNA"/>
</dbReference>
<dbReference type="RefSeq" id="XP_503682.1">
    <property type="nucleotide sequence ID" value="XM_503682.1"/>
</dbReference>
<dbReference type="SMR" id="Q6C6N0"/>
<dbReference type="FunCoup" id="Q6C6N0">
    <property type="interactions" value="692"/>
</dbReference>
<dbReference type="STRING" id="284591.Q6C6N0"/>
<dbReference type="EnsemblFungi" id="CAG79271">
    <property type="protein sequence ID" value="CAG79271"/>
    <property type="gene ID" value="YALI0_E08030g"/>
</dbReference>
<dbReference type="KEGG" id="yli:2912473"/>
<dbReference type="VEuPathDB" id="FungiDB:YALI0_E08030g"/>
<dbReference type="HOGENOM" id="CLU_000604_84_1_1"/>
<dbReference type="InParanoid" id="Q6C6N0"/>
<dbReference type="OMA" id="VFHIIPI"/>
<dbReference type="OrthoDB" id="116301at4891"/>
<dbReference type="Proteomes" id="UP000001300">
    <property type="component" value="Chromosome E"/>
</dbReference>
<dbReference type="GO" id="GO:0005743">
    <property type="term" value="C:mitochondrial inner membrane"/>
    <property type="evidence" value="ECO:0000318"/>
    <property type="project" value="GO_Central"/>
</dbReference>
<dbReference type="GO" id="GO:0140359">
    <property type="term" value="F:ABC-type transporter activity"/>
    <property type="evidence" value="ECO:0007669"/>
    <property type="project" value="InterPro"/>
</dbReference>
<dbReference type="GO" id="GO:0005524">
    <property type="term" value="F:ATP binding"/>
    <property type="evidence" value="ECO:0007669"/>
    <property type="project" value="UniProtKB-KW"/>
</dbReference>
<dbReference type="GO" id="GO:0016887">
    <property type="term" value="F:ATP hydrolysis activity"/>
    <property type="evidence" value="ECO:0007669"/>
    <property type="project" value="InterPro"/>
</dbReference>
<dbReference type="GO" id="GO:0042626">
    <property type="term" value="F:ATPase-coupled transmembrane transporter activity"/>
    <property type="evidence" value="ECO:0000318"/>
    <property type="project" value="GO_Central"/>
</dbReference>
<dbReference type="GO" id="GO:0006879">
    <property type="term" value="P:intracellular iron ion homeostasis"/>
    <property type="evidence" value="ECO:0000318"/>
    <property type="project" value="GO_Central"/>
</dbReference>
<dbReference type="GO" id="GO:0055085">
    <property type="term" value="P:transmembrane transport"/>
    <property type="evidence" value="ECO:0000318"/>
    <property type="project" value="GO_Central"/>
</dbReference>
<dbReference type="CDD" id="cd18582">
    <property type="entry name" value="ABC_6TM_ATM1_ABCB7"/>
    <property type="match status" value="1"/>
</dbReference>
<dbReference type="FunFam" id="1.20.1560.10:FF:000004">
    <property type="entry name" value="ATP-binding cassette sub-family B member 7"/>
    <property type="match status" value="1"/>
</dbReference>
<dbReference type="FunFam" id="3.40.50.300:FF:000287">
    <property type="entry name" value="Multidrug ABC transporter ATP-binding protein"/>
    <property type="match status" value="1"/>
</dbReference>
<dbReference type="Gene3D" id="1.20.1560.10">
    <property type="entry name" value="ABC transporter type 1, transmembrane domain"/>
    <property type="match status" value="1"/>
</dbReference>
<dbReference type="Gene3D" id="3.40.50.300">
    <property type="entry name" value="P-loop containing nucleotide triphosphate hydrolases"/>
    <property type="match status" value="1"/>
</dbReference>
<dbReference type="InterPro" id="IPR003593">
    <property type="entry name" value="AAA+_ATPase"/>
</dbReference>
<dbReference type="InterPro" id="IPR011527">
    <property type="entry name" value="ABC1_TM_dom"/>
</dbReference>
<dbReference type="InterPro" id="IPR036640">
    <property type="entry name" value="ABC1_TM_sf"/>
</dbReference>
<dbReference type="InterPro" id="IPR003439">
    <property type="entry name" value="ABC_transporter-like_ATP-bd"/>
</dbReference>
<dbReference type="InterPro" id="IPR017871">
    <property type="entry name" value="ABC_transporter-like_CS"/>
</dbReference>
<dbReference type="InterPro" id="IPR027417">
    <property type="entry name" value="P-loop_NTPase"/>
</dbReference>
<dbReference type="InterPro" id="IPR039421">
    <property type="entry name" value="Type_1_exporter"/>
</dbReference>
<dbReference type="PANTHER" id="PTHR24221">
    <property type="entry name" value="ATP-BINDING CASSETTE SUB-FAMILY B"/>
    <property type="match status" value="1"/>
</dbReference>
<dbReference type="PANTHER" id="PTHR24221:SF402">
    <property type="entry name" value="IRON-SULFUR CLUSTERS TRANSPORTER ABCB7, MITOCHONDRIAL"/>
    <property type="match status" value="1"/>
</dbReference>
<dbReference type="Pfam" id="PF00664">
    <property type="entry name" value="ABC_membrane"/>
    <property type="match status" value="1"/>
</dbReference>
<dbReference type="Pfam" id="PF00005">
    <property type="entry name" value="ABC_tran"/>
    <property type="match status" value="1"/>
</dbReference>
<dbReference type="SMART" id="SM00382">
    <property type="entry name" value="AAA"/>
    <property type="match status" value="1"/>
</dbReference>
<dbReference type="SUPFAM" id="SSF90123">
    <property type="entry name" value="ABC transporter transmembrane region"/>
    <property type="match status" value="1"/>
</dbReference>
<dbReference type="SUPFAM" id="SSF52540">
    <property type="entry name" value="P-loop containing nucleoside triphosphate hydrolases"/>
    <property type="match status" value="1"/>
</dbReference>
<dbReference type="PROSITE" id="PS50929">
    <property type="entry name" value="ABC_TM1F"/>
    <property type="match status" value="1"/>
</dbReference>
<dbReference type="PROSITE" id="PS00211">
    <property type="entry name" value="ABC_TRANSPORTER_1"/>
    <property type="match status" value="1"/>
</dbReference>
<dbReference type="PROSITE" id="PS50893">
    <property type="entry name" value="ABC_TRANSPORTER_2"/>
    <property type="match status" value="1"/>
</dbReference>
<sequence>MWLSLPRSGYGSVATLTSKRVLACLTPLRQFSTSPAVSNANHKNVDNINKSPANDAANNAVEKGDKPTTSPEKLATKAEKSSANSVKAAANALGESNLSNSEQRRLDWIIMKDMLKYIWPKGKTSVKFRVLVAVALLVGAKLLNVQVPFFFKEIIDDMNIEWNSATALGVGITALIFSYGAARFGAVLFGELRNAIFASVAQKAIKEVATNVFRHLLKLDMAFHLSRQTGGITRAIDRGTKGISFVLSSMVFHIIPIALEISLVCGILSYNFGWKYALVTGATMVSYAIFTITTTSWRTKFRRNANRADNEASNVCLDSLINIEAVKSFGNEGYMVDKYQSALTKYEKASIKIATSLAFLNSGQNLIFSSALTAMMYMTCCGVADGSLTVGDLVLVNQLVFQLSVPLNFLGSVYRDLRQSLLDMGSLFSLQKVAGQIQESPNAKPLQLTNGEIRFENVTYGYHPDRPILKNASFVIPGGLKTAIVGPSGSGKSTILKLAFRFYDTQEGRILIDGQDVREVTLASLRSAIGVVPQDTPLFNDSIMNNIRFGRLEADDKEVENAACAAKLDALVRQLPDGWNTNVGERGMMISGGEKQRLAVARVLLKNSPVVFLDEATSALDTNTERQLLANMDQVLGDKTCVAIAHRLRTVADSDKIICLNQGGVEEEGTQAELLLKDGLYKSMWDAQEQVELGEEGIKEAEEKAAKKDV</sequence>
<accession>Q6C6N0</accession>